<reference key="1">
    <citation type="journal article" date="2011" name="Proc. Natl. Acad. Sci. U.S.A.">
        <title>Genomic anatomy of Escherichia coli O157:H7 outbreaks.</title>
        <authorList>
            <person name="Eppinger M."/>
            <person name="Mammel M.K."/>
            <person name="Leclerc J.E."/>
            <person name="Ravel J."/>
            <person name="Cebula T.A."/>
        </authorList>
    </citation>
    <scope>NUCLEOTIDE SEQUENCE [LARGE SCALE GENOMIC DNA]</scope>
    <source>
        <strain>EC4115 / EHEC</strain>
    </source>
</reference>
<accession>B5YTM6</accession>
<evidence type="ECO:0000255" key="1">
    <source>
        <dbReference type="HAMAP-Rule" id="MF_01365"/>
    </source>
</evidence>
<evidence type="ECO:0000305" key="2"/>
<organism>
    <name type="scientific">Escherichia coli O157:H7 (strain EC4115 / EHEC)</name>
    <dbReference type="NCBI Taxonomy" id="444450"/>
    <lineage>
        <taxon>Bacteria</taxon>
        <taxon>Pseudomonadati</taxon>
        <taxon>Pseudomonadota</taxon>
        <taxon>Gammaproteobacteria</taxon>
        <taxon>Enterobacterales</taxon>
        <taxon>Enterobacteriaceae</taxon>
        <taxon>Escherichia</taxon>
    </lineage>
</organism>
<sequence length="177" mass="18904">MSRVAKAPVVVPAGVDVKINGQVITIKGKNGELTRTLNDAVEVKHADNTLTFGPRDGYADGWAQAGTARALLNSMVIGVTEGFTKKLQLVGVGYRAAVKGNVINLSLGFSHPVDHQLPAGITAECPTQTEIVLKGADKQVIGQVAADLRAYRRPEPYKGKGVRYADEVVRTKEAKKK</sequence>
<dbReference type="EMBL" id="CP001164">
    <property type="protein sequence ID" value="ACI37495.1"/>
    <property type="molecule type" value="Genomic_DNA"/>
</dbReference>
<dbReference type="RefSeq" id="WP_000091945.1">
    <property type="nucleotide sequence ID" value="NC_011353.1"/>
</dbReference>
<dbReference type="SMR" id="B5YTM6"/>
<dbReference type="GeneID" id="86948169"/>
<dbReference type="KEGG" id="ecf:ECH74115_4628"/>
<dbReference type="HOGENOM" id="CLU_065464_1_2_6"/>
<dbReference type="GO" id="GO:0022625">
    <property type="term" value="C:cytosolic large ribosomal subunit"/>
    <property type="evidence" value="ECO:0007669"/>
    <property type="project" value="TreeGrafter"/>
</dbReference>
<dbReference type="GO" id="GO:0019843">
    <property type="term" value="F:rRNA binding"/>
    <property type="evidence" value="ECO:0007669"/>
    <property type="project" value="UniProtKB-UniRule"/>
</dbReference>
<dbReference type="GO" id="GO:0003735">
    <property type="term" value="F:structural constituent of ribosome"/>
    <property type="evidence" value="ECO:0007669"/>
    <property type="project" value="InterPro"/>
</dbReference>
<dbReference type="GO" id="GO:0002181">
    <property type="term" value="P:cytoplasmic translation"/>
    <property type="evidence" value="ECO:0007669"/>
    <property type="project" value="TreeGrafter"/>
</dbReference>
<dbReference type="FunFam" id="3.90.930.12:FF:000001">
    <property type="entry name" value="50S ribosomal protein L6"/>
    <property type="match status" value="1"/>
</dbReference>
<dbReference type="FunFam" id="3.90.930.12:FF:000002">
    <property type="entry name" value="50S ribosomal protein L6"/>
    <property type="match status" value="1"/>
</dbReference>
<dbReference type="Gene3D" id="3.90.930.12">
    <property type="entry name" value="Ribosomal protein L6, alpha-beta domain"/>
    <property type="match status" value="2"/>
</dbReference>
<dbReference type="HAMAP" id="MF_01365_B">
    <property type="entry name" value="Ribosomal_uL6_B"/>
    <property type="match status" value="1"/>
</dbReference>
<dbReference type="InterPro" id="IPR000702">
    <property type="entry name" value="Ribosomal_uL6-like"/>
</dbReference>
<dbReference type="InterPro" id="IPR036789">
    <property type="entry name" value="Ribosomal_uL6-like_a/b-dom_sf"/>
</dbReference>
<dbReference type="InterPro" id="IPR020040">
    <property type="entry name" value="Ribosomal_uL6_a/b-dom"/>
</dbReference>
<dbReference type="InterPro" id="IPR019906">
    <property type="entry name" value="Ribosomal_uL6_bac-type"/>
</dbReference>
<dbReference type="InterPro" id="IPR002358">
    <property type="entry name" value="Ribosomal_uL6_CS"/>
</dbReference>
<dbReference type="NCBIfam" id="TIGR03654">
    <property type="entry name" value="L6_bact"/>
    <property type="match status" value="1"/>
</dbReference>
<dbReference type="PANTHER" id="PTHR11655">
    <property type="entry name" value="60S/50S RIBOSOMAL PROTEIN L6/L9"/>
    <property type="match status" value="1"/>
</dbReference>
<dbReference type="PANTHER" id="PTHR11655:SF14">
    <property type="entry name" value="LARGE RIBOSOMAL SUBUNIT PROTEIN UL6M"/>
    <property type="match status" value="1"/>
</dbReference>
<dbReference type="Pfam" id="PF00347">
    <property type="entry name" value="Ribosomal_L6"/>
    <property type="match status" value="2"/>
</dbReference>
<dbReference type="PIRSF" id="PIRSF002162">
    <property type="entry name" value="Ribosomal_L6"/>
    <property type="match status" value="1"/>
</dbReference>
<dbReference type="PRINTS" id="PR00059">
    <property type="entry name" value="RIBOSOMALL6"/>
</dbReference>
<dbReference type="SUPFAM" id="SSF56053">
    <property type="entry name" value="Ribosomal protein L6"/>
    <property type="match status" value="2"/>
</dbReference>
<dbReference type="PROSITE" id="PS00525">
    <property type="entry name" value="RIBOSOMAL_L6_1"/>
    <property type="match status" value="1"/>
</dbReference>
<comment type="function">
    <text evidence="1">This protein binds to the 23S rRNA, and is important in its secondary structure. It is located near the subunit interface in the base of the L7/L12 stalk, and near the tRNA binding site of the peptidyltransferase center.</text>
</comment>
<comment type="subunit">
    <text evidence="1">Part of the 50S ribosomal subunit.</text>
</comment>
<comment type="similarity">
    <text evidence="1">Belongs to the universal ribosomal protein uL6 family.</text>
</comment>
<gene>
    <name evidence="1" type="primary">rplF</name>
    <name type="ordered locus">ECH74115_4628</name>
</gene>
<name>RL6_ECO5E</name>
<feature type="chain" id="PRO_1000143982" description="Large ribosomal subunit protein uL6">
    <location>
        <begin position="1"/>
        <end position="177"/>
    </location>
</feature>
<feature type="modified residue" description="N6-acetyllysine" evidence="1">
    <location>
        <position position="44"/>
    </location>
</feature>
<proteinExistence type="inferred from homology"/>
<protein>
    <recommendedName>
        <fullName evidence="1">Large ribosomal subunit protein uL6</fullName>
    </recommendedName>
    <alternativeName>
        <fullName evidence="2">50S ribosomal protein L6</fullName>
    </alternativeName>
</protein>
<keyword id="KW-0007">Acetylation</keyword>
<keyword id="KW-0687">Ribonucleoprotein</keyword>
<keyword id="KW-0689">Ribosomal protein</keyword>
<keyword id="KW-0694">RNA-binding</keyword>
<keyword id="KW-0699">rRNA-binding</keyword>